<dbReference type="EMBL" id="CP000703">
    <property type="protein sequence ID" value="ABQ48798.1"/>
    <property type="molecule type" value="Genomic_DNA"/>
</dbReference>
<dbReference type="RefSeq" id="WP_001217734.1">
    <property type="nucleotide sequence ID" value="NC_009487.1"/>
</dbReference>
<dbReference type="SMR" id="A5IRH5"/>
<dbReference type="KEGG" id="saj:SaurJH9_0997"/>
<dbReference type="HOGENOM" id="CLU_071496_2_1_9"/>
<dbReference type="GO" id="GO:0030674">
    <property type="term" value="F:protein-macromolecule adaptor activity"/>
    <property type="evidence" value="ECO:0007669"/>
    <property type="project" value="UniProtKB-UniRule"/>
</dbReference>
<dbReference type="Gene3D" id="3.30.70.1950">
    <property type="match status" value="1"/>
</dbReference>
<dbReference type="HAMAP" id="MF_01124">
    <property type="entry name" value="MecA"/>
    <property type="match status" value="1"/>
</dbReference>
<dbReference type="InterPro" id="IPR038471">
    <property type="entry name" value="MecA_C_sf"/>
</dbReference>
<dbReference type="InterPro" id="IPR008681">
    <property type="entry name" value="Neg-reg_MecA"/>
</dbReference>
<dbReference type="NCBIfam" id="NF002642">
    <property type="entry name" value="PRK02315.1-3"/>
    <property type="match status" value="1"/>
</dbReference>
<dbReference type="NCBIfam" id="NF002644">
    <property type="entry name" value="PRK02315.1-5"/>
    <property type="match status" value="1"/>
</dbReference>
<dbReference type="PANTHER" id="PTHR39161">
    <property type="entry name" value="ADAPTER PROTEIN MECA"/>
    <property type="match status" value="1"/>
</dbReference>
<dbReference type="PANTHER" id="PTHR39161:SF1">
    <property type="entry name" value="ADAPTER PROTEIN MECA 1"/>
    <property type="match status" value="1"/>
</dbReference>
<dbReference type="Pfam" id="PF05389">
    <property type="entry name" value="MecA"/>
    <property type="match status" value="1"/>
</dbReference>
<dbReference type="PIRSF" id="PIRSF029008">
    <property type="entry name" value="MecA"/>
    <property type="match status" value="1"/>
</dbReference>
<comment type="function">
    <text evidence="1">Enables the recognition and targeting of unfolded and aggregated proteins to the ClpC protease or to other proteins involved in proteolysis.</text>
</comment>
<comment type="subunit">
    <text evidence="1">Homodimer.</text>
</comment>
<comment type="domain">
    <text>The N-terminal domain probably binds unfolded/aggregated proteins; the C-terminal domain interacts with ClpC.</text>
</comment>
<comment type="similarity">
    <text evidence="1">Belongs to the MecA family.</text>
</comment>
<accession>A5IRH5</accession>
<sequence length="239" mass="28285">MRIERVDDTTVKLFITYSDIEARGFSREDLWTNRKRGEEFFWSMMDEINEEEDFVVEGPLWIQVHAFEKGVEVTISKSKNEDMMNMSDDDATDQFDEQVQELLAQTLEGEDQLEELFEQRTKEKEAQGSKRQKSSARKNTRTIVVKFNDLEDVINYAYHSNPITTEFEDLLYMVDGTYYYAVHFDSHVDQEVINDSYSQLLEFAYPTDRTEVYLNDYAKIIMSHNVTAQVRRYFPETTE</sequence>
<reference key="1">
    <citation type="submission" date="2007-05" db="EMBL/GenBank/DDBJ databases">
        <title>Complete sequence of chromosome of Staphylococcus aureus subsp. aureus JH9.</title>
        <authorList>
            <consortium name="US DOE Joint Genome Institute"/>
            <person name="Copeland A."/>
            <person name="Lucas S."/>
            <person name="Lapidus A."/>
            <person name="Barry K."/>
            <person name="Detter J.C."/>
            <person name="Glavina del Rio T."/>
            <person name="Hammon N."/>
            <person name="Israni S."/>
            <person name="Pitluck S."/>
            <person name="Chain P."/>
            <person name="Malfatti S."/>
            <person name="Shin M."/>
            <person name="Vergez L."/>
            <person name="Schmutz J."/>
            <person name="Larimer F."/>
            <person name="Land M."/>
            <person name="Hauser L."/>
            <person name="Kyrpides N."/>
            <person name="Kim E."/>
            <person name="Tomasz A."/>
            <person name="Richardson P."/>
        </authorList>
    </citation>
    <scope>NUCLEOTIDE SEQUENCE [LARGE SCALE GENOMIC DNA]</scope>
    <source>
        <strain>JH9</strain>
    </source>
</reference>
<name>MECA_STAA9</name>
<proteinExistence type="inferred from homology"/>
<gene>
    <name evidence="1" type="primary">mecA</name>
    <name type="ordered locus">SaurJH9_0997</name>
</gene>
<protein>
    <recommendedName>
        <fullName evidence="1">Adapter protein MecA</fullName>
    </recommendedName>
</protein>
<evidence type="ECO:0000255" key="1">
    <source>
        <dbReference type="HAMAP-Rule" id="MF_01124"/>
    </source>
</evidence>
<evidence type="ECO:0000256" key="2">
    <source>
        <dbReference type="SAM" id="MobiDB-lite"/>
    </source>
</evidence>
<feature type="chain" id="PRO_1000085010" description="Adapter protein MecA">
    <location>
        <begin position="1"/>
        <end position="239"/>
    </location>
</feature>
<feature type="region of interest" description="Disordered" evidence="2">
    <location>
        <begin position="118"/>
        <end position="137"/>
    </location>
</feature>
<feature type="compositionally biased region" description="Basic and acidic residues" evidence="2">
    <location>
        <begin position="118"/>
        <end position="128"/>
    </location>
</feature>
<organism>
    <name type="scientific">Staphylococcus aureus (strain JH9)</name>
    <dbReference type="NCBI Taxonomy" id="359786"/>
    <lineage>
        <taxon>Bacteria</taxon>
        <taxon>Bacillati</taxon>
        <taxon>Bacillota</taxon>
        <taxon>Bacilli</taxon>
        <taxon>Bacillales</taxon>
        <taxon>Staphylococcaceae</taxon>
        <taxon>Staphylococcus</taxon>
    </lineage>
</organism>